<keyword id="KW-1185">Reference proteome</keyword>
<keyword id="KW-0687">Ribonucleoprotein</keyword>
<keyword id="KW-0689">Ribosomal protein</keyword>
<keyword id="KW-0694">RNA-binding</keyword>
<keyword id="KW-0699">rRNA-binding</keyword>
<comment type="function">
    <text evidence="1">This protein binds to the 23S rRNA, and is important in its secondary structure. It is located near the subunit interface in the base of the L7/L12 stalk, and near the tRNA binding site of the peptidyltransferase center.</text>
</comment>
<comment type="subunit">
    <text evidence="1">Part of the 50S ribosomal subunit.</text>
</comment>
<comment type="similarity">
    <text evidence="1">Belongs to the universal ribosomal protein uL6 family.</text>
</comment>
<gene>
    <name evidence="1" type="primary">rplF</name>
    <name type="ordered locus">ATP_00356</name>
</gene>
<accession>B3R006</accession>
<name>RL6_PHYMT</name>
<sequence>MSRIGNKEIQVPDSVNVQIQDKNFIVVTGPQGKLEYQFNHKIKILLINTIIKVSRPNNELFMKKIHGTTRALLSNMIEGVEKGFVKRLEIVGLDYKVDLQGDNLILHLGFSHSIKITIPKGIDIEIPKKIKGIHIKGIDKQFVGEFASKIAKLRKPEPYKGKGIRFEGQYVIRKAGKSTKK</sequence>
<proteinExistence type="inferred from homology"/>
<protein>
    <recommendedName>
        <fullName evidence="1">Large ribosomal subunit protein uL6</fullName>
    </recommendedName>
    <alternativeName>
        <fullName evidence="2">50S ribosomal protein L6</fullName>
    </alternativeName>
</protein>
<reference key="1">
    <citation type="journal article" date="2008" name="BMC Genomics">
        <title>The linear chromosome of the plant-pathogenic mycoplasma 'Candidatus Phytoplasma mali'.</title>
        <authorList>
            <person name="Kube M."/>
            <person name="Schneider B."/>
            <person name="Kuhl H."/>
            <person name="Dandekar T."/>
            <person name="Heitmann K."/>
            <person name="Migdoll A.M."/>
            <person name="Reinhardt R."/>
            <person name="Seemueller E."/>
        </authorList>
    </citation>
    <scope>NUCLEOTIDE SEQUENCE [LARGE SCALE GENOMIC DNA]</scope>
    <source>
        <strain>AT</strain>
    </source>
</reference>
<organism>
    <name type="scientific">Phytoplasma mali (strain AT)</name>
    <dbReference type="NCBI Taxonomy" id="482235"/>
    <lineage>
        <taxon>Bacteria</taxon>
        <taxon>Bacillati</taxon>
        <taxon>Mycoplasmatota</taxon>
        <taxon>Mollicutes</taxon>
        <taxon>Acholeplasmatales</taxon>
        <taxon>Acholeplasmataceae</taxon>
        <taxon>Candidatus Phytoplasma</taxon>
        <taxon>16SrX (Apple proliferation group)</taxon>
    </lineage>
</organism>
<dbReference type="EMBL" id="CU469464">
    <property type="protein sequence ID" value="CAP18543.1"/>
    <property type="molecule type" value="Genomic_DNA"/>
</dbReference>
<dbReference type="SMR" id="B3R006"/>
<dbReference type="STRING" id="37692.ATP_00356"/>
<dbReference type="KEGG" id="pml:ATP_00356"/>
<dbReference type="eggNOG" id="COG0097">
    <property type="taxonomic scope" value="Bacteria"/>
</dbReference>
<dbReference type="HOGENOM" id="CLU_065464_1_2_14"/>
<dbReference type="Proteomes" id="UP000002020">
    <property type="component" value="Chromosome"/>
</dbReference>
<dbReference type="GO" id="GO:0022625">
    <property type="term" value="C:cytosolic large ribosomal subunit"/>
    <property type="evidence" value="ECO:0007669"/>
    <property type="project" value="TreeGrafter"/>
</dbReference>
<dbReference type="GO" id="GO:0019843">
    <property type="term" value="F:rRNA binding"/>
    <property type="evidence" value="ECO:0007669"/>
    <property type="project" value="UniProtKB-UniRule"/>
</dbReference>
<dbReference type="GO" id="GO:0003735">
    <property type="term" value="F:structural constituent of ribosome"/>
    <property type="evidence" value="ECO:0007669"/>
    <property type="project" value="InterPro"/>
</dbReference>
<dbReference type="GO" id="GO:0002181">
    <property type="term" value="P:cytoplasmic translation"/>
    <property type="evidence" value="ECO:0007669"/>
    <property type="project" value="TreeGrafter"/>
</dbReference>
<dbReference type="Gene3D" id="3.90.930.12">
    <property type="entry name" value="Ribosomal protein L6, alpha-beta domain"/>
    <property type="match status" value="2"/>
</dbReference>
<dbReference type="HAMAP" id="MF_01365_B">
    <property type="entry name" value="Ribosomal_uL6_B"/>
    <property type="match status" value="1"/>
</dbReference>
<dbReference type="InterPro" id="IPR000702">
    <property type="entry name" value="Ribosomal_uL6-like"/>
</dbReference>
<dbReference type="InterPro" id="IPR036789">
    <property type="entry name" value="Ribosomal_uL6-like_a/b-dom_sf"/>
</dbReference>
<dbReference type="InterPro" id="IPR020040">
    <property type="entry name" value="Ribosomal_uL6_a/b-dom"/>
</dbReference>
<dbReference type="InterPro" id="IPR019906">
    <property type="entry name" value="Ribosomal_uL6_bac-type"/>
</dbReference>
<dbReference type="InterPro" id="IPR002358">
    <property type="entry name" value="Ribosomal_uL6_CS"/>
</dbReference>
<dbReference type="NCBIfam" id="TIGR03654">
    <property type="entry name" value="L6_bact"/>
    <property type="match status" value="1"/>
</dbReference>
<dbReference type="PANTHER" id="PTHR11655">
    <property type="entry name" value="60S/50S RIBOSOMAL PROTEIN L6/L9"/>
    <property type="match status" value="1"/>
</dbReference>
<dbReference type="PANTHER" id="PTHR11655:SF14">
    <property type="entry name" value="LARGE RIBOSOMAL SUBUNIT PROTEIN UL6M"/>
    <property type="match status" value="1"/>
</dbReference>
<dbReference type="Pfam" id="PF00347">
    <property type="entry name" value="Ribosomal_L6"/>
    <property type="match status" value="2"/>
</dbReference>
<dbReference type="PIRSF" id="PIRSF002162">
    <property type="entry name" value="Ribosomal_L6"/>
    <property type="match status" value="1"/>
</dbReference>
<dbReference type="PRINTS" id="PR00059">
    <property type="entry name" value="RIBOSOMALL6"/>
</dbReference>
<dbReference type="SUPFAM" id="SSF56053">
    <property type="entry name" value="Ribosomal protein L6"/>
    <property type="match status" value="2"/>
</dbReference>
<dbReference type="PROSITE" id="PS00525">
    <property type="entry name" value="RIBOSOMAL_L6_1"/>
    <property type="match status" value="1"/>
</dbReference>
<evidence type="ECO:0000255" key="1">
    <source>
        <dbReference type="HAMAP-Rule" id="MF_01365"/>
    </source>
</evidence>
<evidence type="ECO:0000305" key="2"/>
<feature type="chain" id="PRO_1000166824" description="Large ribosomal subunit protein uL6">
    <location>
        <begin position="1"/>
        <end position="181"/>
    </location>
</feature>